<reference key="1">
    <citation type="journal article" date="2007" name="Nature">
        <title>Evolution of genes and genomes on the Drosophila phylogeny.</title>
        <authorList>
            <consortium name="Drosophila 12 genomes consortium"/>
        </authorList>
    </citation>
    <scope>NUCLEOTIDE SEQUENCE [LARGE SCALE GENOMIC DNA]</scope>
    <source>
        <strain>Tucson 14024-0371.13</strain>
    </source>
</reference>
<dbReference type="EMBL" id="CH902618">
    <property type="protein sequence ID" value="EDV40092.1"/>
    <property type="molecule type" value="Genomic_DNA"/>
</dbReference>
<dbReference type="SMR" id="B3M9A8"/>
<dbReference type="FunCoup" id="B3M9A8">
    <property type="interactions" value="1167"/>
</dbReference>
<dbReference type="STRING" id="7217.B3M9A8"/>
<dbReference type="EnsemblMetazoa" id="FBtr0115047">
    <property type="protein sequence ID" value="FBpp0113539"/>
    <property type="gene ID" value="FBgn0087388"/>
</dbReference>
<dbReference type="EnsemblMetazoa" id="XM_001957250.4">
    <property type="protein sequence ID" value="XP_001957286.1"/>
    <property type="gene ID" value="LOC6493217"/>
</dbReference>
<dbReference type="GeneID" id="6493217"/>
<dbReference type="KEGG" id="dan:6493217"/>
<dbReference type="eggNOG" id="KOG4783">
    <property type="taxonomic scope" value="Eukaryota"/>
</dbReference>
<dbReference type="HOGENOM" id="CLU_143588_2_0_1"/>
<dbReference type="InParanoid" id="B3M9A8"/>
<dbReference type="OMA" id="PYFRGNE"/>
<dbReference type="OrthoDB" id="160405at2759"/>
<dbReference type="PhylomeDB" id="B3M9A8"/>
<dbReference type="Proteomes" id="UP000007801">
    <property type="component" value="Unassembled WGS sequence"/>
</dbReference>
<dbReference type="GO" id="GO:0005789">
    <property type="term" value="C:endoplasmic reticulum membrane"/>
    <property type="evidence" value="ECO:0007669"/>
    <property type="project" value="UniProtKB-SubCell"/>
</dbReference>
<dbReference type="GO" id="GO:0033116">
    <property type="term" value="C:endoplasmic reticulum-Golgi intermediate compartment membrane"/>
    <property type="evidence" value="ECO:0007669"/>
    <property type="project" value="UniProtKB-SubCell"/>
</dbReference>
<dbReference type="GO" id="GO:0012507">
    <property type="term" value="C:ER to Golgi transport vesicle membrane"/>
    <property type="evidence" value="ECO:0007669"/>
    <property type="project" value="UniProtKB-SubCell"/>
</dbReference>
<dbReference type="GO" id="GO:0070072">
    <property type="term" value="P:vacuolar proton-transporting V-type ATPase complex assembly"/>
    <property type="evidence" value="ECO:0007669"/>
    <property type="project" value="UniProtKB-UniRule"/>
</dbReference>
<dbReference type="HAMAP" id="MF_03058">
    <property type="entry name" value="VMA21"/>
    <property type="match status" value="1"/>
</dbReference>
<dbReference type="InterPro" id="IPR019013">
    <property type="entry name" value="Vma21"/>
</dbReference>
<dbReference type="Pfam" id="PF09446">
    <property type="entry name" value="VMA21"/>
    <property type="match status" value="1"/>
</dbReference>
<gene>
    <name type="ORF">GF10347</name>
</gene>
<proteinExistence type="inferred from homology"/>
<sequence length="106" mass="11606">MSNKNKKSGGAGNGAAQKQTRQQSHDSQDYSSFKIVLFYCMLIVFLPVVTFFLLKGFVLDRFFSLSEVKVNIASAVGAVVSLHIALGLYIYRAYFGATGSKAVKED</sequence>
<evidence type="ECO:0000255" key="1">
    <source>
        <dbReference type="HAMAP-Rule" id="MF_03058"/>
    </source>
</evidence>
<evidence type="ECO:0000256" key="2">
    <source>
        <dbReference type="SAM" id="MobiDB-lite"/>
    </source>
</evidence>
<protein>
    <recommendedName>
        <fullName evidence="1">Vacuolar ATPase assembly integral membrane protein VMA21 homolog</fullName>
    </recommendedName>
</protein>
<comment type="function">
    <text evidence="1">Required for the assembly of the V0 complex of the vacuolar ATPase (V-ATPase) in the endoplasmic reticulum.</text>
</comment>
<comment type="subcellular location">
    <subcellularLocation>
        <location evidence="1">Endoplasmic reticulum membrane</location>
        <topology evidence="1">Multi-pass membrane protein</topology>
    </subcellularLocation>
    <subcellularLocation>
        <location evidence="1">Endoplasmic reticulum-Golgi intermediate compartment membrane</location>
        <topology evidence="1">Multi-pass membrane protein</topology>
    </subcellularLocation>
    <subcellularLocation>
        <location evidence="1">Cytoplasmic vesicle</location>
        <location evidence="1">COPII-coated vesicle membrane</location>
        <topology evidence="1">Multi-pass membrane protein</topology>
    </subcellularLocation>
</comment>
<comment type="similarity">
    <text evidence="1">Belongs to the VMA21 family.</text>
</comment>
<keyword id="KW-0968">Cytoplasmic vesicle</keyword>
<keyword id="KW-0256">Endoplasmic reticulum</keyword>
<keyword id="KW-0472">Membrane</keyword>
<keyword id="KW-1185">Reference proteome</keyword>
<keyword id="KW-0812">Transmembrane</keyword>
<keyword id="KW-1133">Transmembrane helix</keyword>
<accession>B3M9A8</accession>
<feature type="chain" id="PRO_0000377571" description="Vacuolar ATPase assembly integral membrane protein VMA21 homolog">
    <location>
        <begin position="1"/>
        <end position="106"/>
    </location>
</feature>
<feature type="topological domain" description="Cytoplasmic" evidence="1">
    <location>
        <begin position="1"/>
        <end position="32"/>
    </location>
</feature>
<feature type="transmembrane region" description="Helical" evidence="1">
    <location>
        <begin position="33"/>
        <end position="53"/>
    </location>
</feature>
<feature type="topological domain" description="Lumenal" evidence="1">
    <location>
        <begin position="54"/>
        <end position="69"/>
    </location>
</feature>
<feature type="transmembrane region" description="Helical" evidence="1">
    <location>
        <begin position="70"/>
        <end position="90"/>
    </location>
</feature>
<feature type="topological domain" description="Cytoplasmic" evidence="1">
    <location>
        <begin position="91"/>
        <end position="106"/>
    </location>
</feature>
<feature type="region of interest" description="Disordered" evidence="2">
    <location>
        <begin position="1"/>
        <end position="26"/>
    </location>
</feature>
<name>VMA21_DROAN</name>
<organism>
    <name type="scientific">Drosophila ananassae</name>
    <name type="common">Fruit fly</name>
    <dbReference type="NCBI Taxonomy" id="7217"/>
    <lineage>
        <taxon>Eukaryota</taxon>
        <taxon>Metazoa</taxon>
        <taxon>Ecdysozoa</taxon>
        <taxon>Arthropoda</taxon>
        <taxon>Hexapoda</taxon>
        <taxon>Insecta</taxon>
        <taxon>Pterygota</taxon>
        <taxon>Neoptera</taxon>
        <taxon>Endopterygota</taxon>
        <taxon>Diptera</taxon>
        <taxon>Brachycera</taxon>
        <taxon>Muscomorpha</taxon>
        <taxon>Ephydroidea</taxon>
        <taxon>Drosophilidae</taxon>
        <taxon>Drosophila</taxon>
        <taxon>Sophophora</taxon>
    </lineage>
</organism>